<sequence length="3414" mass="392246">MLSVRLLIVVLALANAENLVRKSVEHLTQEETLDLQAALRELQMDSSSIGFQKIAAAHGAPASCVHKDTSIACCIHGMPTFPHWHRAYVVHMERALQTKRRTSGLPYWDWTEPITQLPSLAADPVYIDSQGGKAHTNYWYRGNIDFLDKKTNRAVDDRLFEKVKPGQHTHLMESVLDALEQDEFCKFEIQFELAHNAIHYLVGGKHDYSMANLEYTAYDPIFFLHHSNVDRIFAIWQRLQELRNKDPKAMDCAQELLHQKMEPFSWEDNDIPLTNEHSTPADLFDYCELHYDYDTLNLNGMTPEELKTYLDERSSRARAFASFRLKGFGGSANVFVYVCIPDDNDRNDDHCEKAGDFFVLGGPSEMKWQFYRPYLFDLSDTVHKMGMKLDGHYTVKAELFSVNGTALPDDLLPHPVVVHHPEKGFTDPPVKHHQSANLLVRKNINDLTREEVLNLREAFHKFQEDRSVDGYQATAEYHGLPARCPRPDAKDRYACCVHGMPIFPHWHRLFVTQVEDALVGRGATIGIPYWDWTEPMTHIPGLAGNKTYVDSHGASHTNPFHSSVIAFEENAPHTKRQIDQRLFKPATFGHHTDLFNQILYAFEQEDYCDFEVQFEITHNTIHAWTGGSEHFSMSSLHYTAFDPLFYFHHSNVDRLWAVWQALQMRRHKPYRAHCAISLEHMHLKPFAFSSPLNNNEKTHANAMPNKIYDYENVLHYTYEDLTFGGISLENIEKMIHENQQEDRIYAGFLLAGIRTSANVDIFIKTTDSVQHKAGTFAVLGGSKEMKWGFDRVFKFDITHVLKDLDLTADGDFEVTVDITEVDGTKLASSLIPHASVIREHARVKFDKVPRSRLIRKNVDRLSPEEMNELRKALALLKEDKSAGGFQQLGAFHGEPKWCPSPEASKKFACCVHGMSVFPHWHRLLTVQSENALRRHGYDGALPYWDWTSPLNHLPELADHEKYVDPEDGVEKHNPWFDGHIDTVDKTTTRSVQNKLFEQPEFGHYTSIAKQVLLALEQDNFCDFEIQYEIAHNYIHALVGGAQPYGMASLRYTAFDPLFYLHHSNTDRIWAIWQALQKYRGKPYNVANCAVTSMREPLQPFGLSANINTDHVTKEHSVPFNVFDYKTNFNYEYDTLEFNGLSISQLNKKLEAIKSQDRFFAGFLLSGFKKSSLVKFNICTDSSNCHPAGEFYLLGDENEMPWAYDRVFKYDITEKLHDLKLHAEDHFYIDYEVFDLKPASLGKDLFKQPSVIHEPRIGHHEGEVYQAEVTSANRIRKNIENLSLGELESLRAAFLEIENDGTYESIAKFHGSPGLCQLNGNPISCCVHGMPTFPHWHRLYVVVVENALLKKGSSVAVPYWDWTKRIEHLPHLISDATYYNSRQHHYETNPFHHGKITHENEITTRDPKDSLFHSDYFYEQVLYALEQDNFCDFEIQLEILHNALHSLLGGKGKYSMSNLDYAAFDPVFFLHHATTDRIWAIWQDLQRFRKRPYREANCAIQLMHTPLQPFDKSDNNDEATKTHATPHDGFEYQNSFGYAYDNLELNHYSIPQLDHMLQERKRHDRVFAGFLLHNIGTSADGHVFVCLPTGEHTKDCSHEAGMFSILGGQTEMSFVFDRLYKLDITKALKKNGVHLQGDFDLEIEITAVNGSHLDSHVIHSPTILFEAGTDSAHTDDGHTEPVMIRKDITQLDKRQQLSLVKALESMKADHSSDGFQAIASFHALPPLCPSPAASKRFACCVHGMATFPQWHRLYTVQFQDSLRKHGAVVGLPYWDWTLPRSELPELLTVSTIHDPETGRDIPNPFIGSKIEFEGENVHTKRDINRDRLFQGSTKTHHNWFIEQALLALEQTNYCDFEVQFEIMHNGVHTWVGGKEPYGIGHLHYASYDPLFYIHHSQTDRIWAIWQSLQRFRGLSGSEANCAVNLMKTPLKPFSFGAPYNLNDHTHDFSKPEDTFDYQKFGYIYDTLEFAGWSIRGIDHIVRNRQEHSRVFAGFLLEGFGTSATVDFQVCRTAGDCEDAGYFTVLGGEKEMPWAFDRLYKYDITETLDKMNLRHDEIFQIEVTITSYDGTVLDSGLIPTPSIIYDPAHHDISSHHLSLNKVRHDLSTLSERDIGSLKYALSSLQADTSADGFAAIASFHGLPAKCNDSHNNEVACCIHGMPTFPHWHRLYTLQFEQALRRHGSSVAVPYWDWTKPIHNIPHLFTDKEYYDVWRNKVMPNPFARGYVPSHDTYTVRDVQEGLFHLTSTGEHSALLNQALLALEQHDYCDFAVQFEVMHNTIHYLVGGPQVYSLSSLHYASYDPIFFIHHSFVDKVWAVWQALQEKRGLPSDRADCAVSLMTQNMRPFHYEINHNQFTKKHAVPNDVFKYELLGYRYDNLEIGGMNLHEIEKEIKDKQHHVRVFAGFLLHGIRTSADVQFQICKTSEDCHHGGQIFVLGGTKEMAWAYNRLFKYDITHALHDAHITPEDVFHPSEPFFIKVSVTAVNGTVLPASILHAPTIIYEPGLDHHEDHHSSSMAGHGVRKEINTLTTAEVDNLKDAMRAVMADHGPNGYQAIAAFHGNPPMCPMPDGKNYSCCTHGMATFPHWHRLYTKQMEDALTAHGARVGLPYWDGTTAFTALPTFVTDEEDNPFHHGHIDYLGVDTTRSPRDKLFNDPERGSESFFYRQVLLALEQTDFCQFEVQFEITHNAIHSWTGGLTPYGMSTLEYTTYDPLFWLHHANTDRIWAIWQALQEYRGLPYDHANCEIQAMKRPLRPFSDPINHNAFTHSNAKPTDVFEYSRFNFQYDNLRFHGMTIKKLEHELEKQKEEDRTFAAFLLHGIKKSADVSFDVCNHDGECHFAGTFAILGGEHEMPWSFDRLFRYDITQVLKQMHLEYDSDFTFHMRIIDTSGKQLPSDLIKMPTVEHSPGGKHHEKHHEDHHEDILVRKNIHSLSHHEAEELRDALYKLQNDESHGGYEHIAGFHGYPNLCPEKGDEKYPCCVHGMSIFPHWHRLHTIQFERALKKHGSHLGIPYWDWTQTISSLPTFFADSGNNNPFFKYHIRSINQDTVRDVNEAIFQQTKFGEFSSIFYLALQALEEDNYCDFEVQYEILHNEVHALIGGAEKYSMSTLEYSAFDPYFMIHHASLDKIWIIWQELQKRRVKPAHAGSCAGDIMHVPLHPFNYESVNNDDFTRENSLPNAVVDSHRFNYKYDNLNLHGHNIEELEEVLRSLRLKSRVFAGFVLSGIRTTAVVKVYIKSGTDSDDEYAGSFVILGGAKEMPWAYERLYRFDITETVHNLNLTDDHVKFRFDLKKYDHTELDASVLPAPIIVRRPNNAVFDIIEIPIGKDVNLPPKVVVKRGTKIMFMSVDEAVTTPMLNLGSYTAMFKCKVPPFSFHAFELGKMYSVESGDYFMTASTTELCNDNNLRIHVHVDDE</sequence>
<organism>
    <name type="scientific">Megathura crenulata</name>
    <name type="common">Giant keyhole limpet</name>
    <dbReference type="NCBI Taxonomy" id="55429"/>
    <lineage>
        <taxon>Eukaryota</taxon>
        <taxon>Metazoa</taxon>
        <taxon>Spiralia</taxon>
        <taxon>Lophotrochozoa</taxon>
        <taxon>Mollusca</taxon>
        <taxon>Gastropoda</taxon>
        <taxon>Vetigastropoda</taxon>
        <taxon>Lepetellida</taxon>
        <taxon>Fissurelloidea</taxon>
        <taxon>Fissurellidae</taxon>
        <taxon>Megathura</taxon>
    </lineage>
</organism>
<dbReference type="EMBL" id="AJ698341">
    <property type="protein sequence ID" value="CAG28309.2"/>
    <property type="status" value="ALT_SEQ"/>
    <property type="molecule type" value="Genomic_DNA"/>
</dbReference>
<dbReference type="EMBL" id="AJ698339">
    <property type="protein sequence ID" value="CAG28307.2"/>
    <property type="status" value="ALT_SEQ"/>
    <property type="molecule type" value="mRNA"/>
</dbReference>
<dbReference type="PDB" id="3L6W">
    <property type="method" value="X-ray"/>
    <property type="resolution" value="4.00 A"/>
    <property type="chains" value="A/B=2922-3412"/>
</dbReference>
<dbReference type="PDB" id="3QJO">
    <property type="method" value="X-ray"/>
    <property type="resolution" value="4.00 A"/>
    <property type="chains" value="A/B=2922-3412"/>
</dbReference>
<dbReference type="PDB" id="4BED">
    <property type="method" value="EM"/>
    <property type="resolution" value="9.00 A"/>
    <property type="chains" value="A/C=17-1680, B/D=1681-3414"/>
</dbReference>
<dbReference type="PDBsum" id="3L6W"/>
<dbReference type="PDBsum" id="3QJO"/>
<dbReference type="PDBsum" id="4BED"/>
<dbReference type="EMDB" id="EMD-14407"/>
<dbReference type="EMDB" id="EMD-1569"/>
<dbReference type="SMR" id="Q10583"/>
<dbReference type="ChEMBL" id="CHEMBL4662943"/>
<dbReference type="GlyConnect" id="211">
    <property type="glycosylation" value="15 N-Linked glycans"/>
</dbReference>
<dbReference type="GlyCosmos" id="Q10583">
    <property type="glycosylation" value="6 sites, 26 glycans"/>
</dbReference>
<dbReference type="EvolutionaryTrace" id="Q10583"/>
<dbReference type="GO" id="GO:0005576">
    <property type="term" value="C:extracellular region"/>
    <property type="evidence" value="ECO:0007669"/>
    <property type="project" value="UniProtKB-SubCell"/>
</dbReference>
<dbReference type="GO" id="GO:0046872">
    <property type="term" value="F:metal ion binding"/>
    <property type="evidence" value="ECO:0007669"/>
    <property type="project" value="UniProtKB-KW"/>
</dbReference>
<dbReference type="GO" id="GO:0016491">
    <property type="term" value="F:oxidoreductase activity"/>
    <property type="evidence" value="ECO:0007669"/>
    <property type="project" value="InterPro"/>
</dbReference>
<dbReference type="GO" id="GO:0005344">
    <property type="term" value="F:oxygen carrier activity"/>
    <property type="evidence" value="ECO:0007669"/>
    <property type="project" value="UniProtKB-KW"/>
</dbReference>
<dbReference type="Gene3D" id="2.60.40.2570">
    <property type="match status" value="1"/>
</dbReference>
<dbReference type="Gene3D" id="1.10.1280.10">
    <property type="entry name" value="Di-copper center containing domain from catechol oxidase"/>
    <property type="match status" value="8"/>
</dbReference>
<dbReference type="Gene3D" id="2.60.310.10">
    <property type="entry name" value="Haemocyanin C-terminal domain"/>
    <property type="match status" value="8"/>
</dbReference>
<dbReference type="InterPro" id="IPR008922">
    <property type="entry name" value="Di-copper_centre_dom_sf"/>
</dbReference>
<dbReference type="InterPro" id="IPR028999">
    <property type="entry name" value="Haemocyanin_beta-sandwich"/>
</dbReference>
<dbReference type="InterPro" id="IPR036848">
    <property type="entry name" value="Haemocyanin_C_sf"/>
</dbReference>
<dbReference type="InterPro" id="IPR050316">
    <property type="entry name" value="Tyrosinase/Hemocyanin"/>
</dbReference>
<dbReference type="InterPro" id="IPR002227">
    <property type="entry name" value="Tyrosinase_Cu-bd"/>
</dbReference>
<dbReference type="PANTHER" id="PTHR11474">
    <property type="entry name" value="TYROSINASE FAMILY MEMBER"/>
    <property type="match status" value="1"/>
</dbReference>
<dbReference type="PANTHER" id="PTHR11474:SF126">
    <property type="entry name" value="TYROSINASE-LIKE PROTEIN TYR-1-RELATED"/>
    <property type="match status" value="1"/>
</dbReference>
<dbReference type="Pfam" id="PF14830">
    <property type="entry name" value="Haemocyan_bet_s"/>
    <property type="match status" value="8"/>
</dbReference>
<dbReference type="Pfam" id="PF00264">
    <property type="entry name" value="Tyrosinase"/>
    <property type="match status" value="8"/>
</dbReference>
<dbReference type="PRINTS" id="PR00092">
    <property type="entry name" value="TYROSINASE"/>
</dbReference>
<dbReference type="SUPFAM" id="SSF81277">
    <property type="entry name" value="C-terminal domain of mollusc hemocyanin"/>
    <property type="match status" value="8"/>
</dbReference>
<dbReference type="SUPFAM" id="SSF48056">
    <property type="entry name" value="Di-copper centre-containing domain"/>
    <property type="match status" value="8"/>
</dbReference>
<dbReference type="PROSITE" id="PS00497">
    <property type="entry name" value="TYROSINASE_1"/>
    <property type="match status" value="7"/>
</dbReference>
<dbReference type="PROSITE" id="PS00498">
    <property type="entry name" value="TYROSINASE_2"/>
    <property type="match status" value="8"/>
</dbReference>
<protein>
    <recommendedName>
        <fullName evidence="13">Hemocyanin 1</fullName>
    </recommendedName>
    <alternativeName>
        <fullName evidence="7">Keyhole limpet hemocyanin A</fullName>
        <shortName evidence="7">KLH-A</shortName>
    </alternativeName>
</protein>
<name>HCY1_MEGCR</name>
<reference evidence="12" key="1">
    <citation type="journal article" date="2004" name="Micron">
        <title>Evolution of molluscan hemocyanins as deduced from DNA sequencing.</title>
        <authorList>
            <person name="Lieb B."/>
            <person name="Markl J."/>
        </authorList>
    </citation>
    <scope>NUCLEOTIDE SEQUENCE [MRNA]</scope>
</reference>
<reference evidence="13" key="2">
    <citation type="submission" date="2013-04" db="EMBL/GenBank/DDBJ databases">
        <title>KLH1 and KLH2: cDNAs, genes and evolutionary implications.</title>
        <authorList>
            <person name="Lieb B."/>
            <person name="Streit K."/>
            <person name="Markl J."/>
        </authorList>
    </citation>
    <scope>NUCLEOTIDE SEQUENCE [GENOMIC DNA]</scope>
</reference>
<reference key="3">
    <citation type="journal article" date="1996" name="Comp. Biochem. Physiol.">
        <title>Keyhole limpet hemocyanin: structural and functional characterization of two different subunits and multimers.</title>
        <authorList>
            <person name="Swerdlow R.D."/>
            <person name="Ebert R.F."/>
            <person name="Lee P."/>
            <person name="Bonaventura C."/>
            <person name="Miller K.I."/>
        </authorList>
    </citation>
    <scope>PROTEIN SEQUENCE OF 17-30</scope>
    <scope>TISSUE SPECIFICITY</scope>
</reference>
<reference key="4">
    <citation type="journal article" date="1999" name="Micron">
        <title>Keyhole limpet hemocyanin (KLH): a biomedical review.</title>
        <authorList>
            <person name="Harris J.R."/>
            <person name="Markl J."/>
        </authorList>
    </citation>
    <scope>REVIEW</scope>
    <scope>BIOTECHNOLOGY</scope>
</reference>
<reference evidence="16" key="5">
    <citation type="journal article" date="2009" name="J. Mol. Biol.">
        <title>Keyhole limpet hemocyanin: 9-A CryoEM structure and molecular model of the KLH1 didecamer reveal the interfaces and intricate topology of the 160 functional units.</title>
        <authorList>
            <person name="Gatsogiannis C."/>
            <person name="Markl J."/>
        </authorList>
    </citation>
    <scope>STRUCTURE BY ELECTRON MICROSCOPY (9.00 ANGSTROMS) OF 17-3414 IN COMPLEX WITH COPPER</scope>
    <scope>DISULFIDE BONDS</scope>
</reference>
<reference evidence="14" key="6">
    <citation type="journal article" date="2010" name="Biochem. J.">
        <title>Cupredoxin-like domains in haemocyanins.</title>
        <authorList>
            <person name="Jaenicke E."/>
            <person name="Buchler K."/>
            <person name="Markl J."/>
            <person name="Decker H."/>
            <person name="Barends T.R."/>
        </authorList>
    </citation>
    <scope>X-RAY CRYSTALLOGRAPHY (4.00 ANGSTROMS) OF 2922-3412</scope>
</reference>
<reference evidence="15" key="7">
    <citation type="journal article" date="2011" name="IUBMB Life">
        <title>The refined structure of functional unit h of keyhole limpet hemocyanin (KLH1-h) reveals disulfide bridges.</title>
        <authorList>
            <person name="Jaenicke E."/>
            <person name="Buchler K."/>
            <person name="Decker H."/>
            <person name="Markl J."/>
            <person name="Schroder G.F."/>
        </authorList>
    </citation>
    <scope>X-RAY CRYSTALLOGRAPHY (4.00 ANGSTROMS) OF 2922-3412 IN COMPLEX WITH COPPER</scope>
    <scope>DISULFIDE BONDS</scope>
</reference>
<evidence type="ECO:0000250" key="1">
    <source>
        <dbReference type="UniProtKB" id="P56824"/>
    </source>
</evidence>
<evidence type="ECO:0000255" key="2"/>
<evidence type="ECO:0000255" key="3">
    <source>
        <dbReference type="PROSITE-ProRule" id="PRU00498"/>
    </source>
</evidence>
<evidence type="ECO:0000269" key="4">
    <source>
    </source>
</evidence>
<evidence type="ECO:0000269" key="5">
    <source>
    </source>
</evidence>
<evidence type="ECO:0000303" key="6">
    <source>
    </source>
</evidence>
<evidence type="ECO:0000303" key="7">
    <source>
    </source>
</evidence>
<evidence type="ECO:0000305" key="8"/>
<evidence type="ECO:0000305" key="9">
    <source>
    </source>
</evidence>
<evidence type="ECO:0000305" key="10">
    <source>
    </source>
</evidence>
<evidence type="ECO:0000305" key="11">
    <source>
    </source>
</evidence>
<evidence type="ECO:0000312" key="12">
    <source>
        <dbReference type="EMBL" id="CAG28307.2"/>
    </source>
</evidence>
<evidence type="ECO:0000312" key="13">
    <source>
        <dbReference type="EMBL" id="CAG28309.2"/>
    </source>
</evidence>
<evidence type="ECO:0007744" key="14">
    <source>
        <dbReference type="PDB" id="3L6W"/>
    </source>
</evidence>
<evidence type="ECO:0007744" key="15">
    <source>
        <dbReference type="PDB" id="3QJO"/>
    </source>
</evidence>
<evidence type="ECO:0007744" key="16">
    <source>
        <dbReference type="PDB" id="4BED"/>
    </source>
</evidence>
<feature type="signal peptide" evidence="2">
    <location>
        <begin position="1"/>
        <end position="16"/>
    </location>
</feature>
<feature type="chain" id="PRO_0000204304" description="Hemocyanin 1">
    <location>
        <begin position="17"/>
        <end position="3414"/>
    </location>
</feature>
<feature type="repeat" description="WD 1" evidence="2">
    <location>
        <begin position="628"/>
        <end position="669"/>
    </location>
</feature>
<feature type="repeat" description="WD 2" evidence="2">
    <location>
        <begin position="1041"/>
        <end position="1082"/>
    </location>
</feature>
<feature type="repeat" description="WD 3" evidence="2">
    <location>
        <begin position="1450"/>
        <end position="1491"/>
    </location>
</feature>
<feature type="repeat" description="WD 4" evidence="2">
    <location>
        <begin position="1873"/>
        <end position="1914"/>
    </location>
</feature>
<feature type="repeat" description="WD 5" evidence="2">
    <location>
        <begin position="2163"/>
        <end position="2199"/>
    </location>
</feature>
<feature type="repeat" description="WD 6" evidence="2">
    <location>
        <begin position="2696"/>
        <end position="2737"/>
    </location>
</feature>
<feature type="repeat" description="WD 7" evidence="2">
    <location>
        <begin position="3101"/>
        <end position="3142"/>
    </location>
</feature>
<feature type="region of interest" description="Functional unit a (wall)" evidence="10">
    <location>
        <begin position="17"/>
        <end position="437"/>
    </location>
</feature>
<feature type="region of interest" description="Functional unit b (wall)" evidence="10">
    <location>
        <begin position="438"/>
        <end position="851"/>
    </location>
</feature>
<feature type="region of interest" description="Functional unit c (wall)" evidence="10">
    <location>
        <begin position="852"/>
        <end position="1271"/>
    </location>
</feature>
<feature type="region of interest" description="Functional unit d (wall)" evidence="10">
    <location>
        <begin position="1272"/>
        <end position="1680"/>
    </location>
</feature>
<feature type="region of interest" description="Functional unit e (wall)" evidence="10">
    <location>
        <begin position="1681"/>
        <end position="2097"/>
    </location>
</feature>
<feature type="region of interest" description="Functional unit f (wall)" evidence="10">
    <location>
        <begin position="2098"/>
        <end position="2517"/>
    </location>
</feature>
<feature type="region of interest" description="Functional unit g (internal arc)" evidence="10">
    <location>
        <begin position="2518"/>
        <end position="2921"/>
    </location>
</feature>
<feature type="region of interest" description="Functional unit h (internal slab)" evidence="10">
    <location>
        <begin position="2922"/>
        <end position="3414"/>
    </location>
</feature>
<feature type="binding site" evidence="10">
    <location>
        <position position="17"/>
    </location>
    <ligand>
        <name>a divalent metal cation</name>
        <dbReference type="ChEBI" id="CHEBI:60240"/>
        <note>structural</note>
    </ligand>
</feature>
<feature type="binding site" evidence="16">
    <location>
        <position position="58"/>
    </location>
    <ligand>
        <name>Cu cation</name>
        <dbReference type="ChEBI" id="CHEBI:23378"/>
        <label>1</label>
    </ligand>
</feature>
<feature type="binding site" evidence="16">
    <location>
        <position position="76"/>
    </location>
    <ligand>
        <name>Cu cation</name>
        <dbReference type="ChEBI" id="CHEBI:23378"/>
        <label>1</label>
    </ligand>
</feature>
<feature type="binding site" evidence="16">
    <location>
        <position position="85"/>
    </location>
    <ligand>
        <name>Cu cation</name>
        <dbReference type="ChEBI" id="CHEBI:23378"/>
        <label>1</label>
    </ligand>
</feature>
<feature type="binding site" evidence="16">
    <location>
        <position position="195"/>
    </location>
    <ligand>
        <name>Cu cation</name>
        <dbReference type="ChEBI" id="CHEBI:23378"/>
        <label>2</label>
    </ligand>
</feature>
<feature type="binding site" evidence="16">
    <location>
        <position position="199"/>
    </location>
    <ligand>
        <name>Cu cation</name>
        <dbReference type="ChEBI" id="CHEBI:23378"/>
        <label>2</label>
    </ligand>
</feature>
<feature type="binding site" evidence="16">
    <location>
        <position position="226"/>
    </location>
    <ligand>
        <name>Cu cation</name>
        <dbReference type="ChEBI" id="CHEBI:23378"/>
        <label>2</label>
    </ligand>
</feature>
<feature type="binding site" evidence="16">
    <location>
        <position position="478"/>
    </location>
    <ligand>
        <name>Cu cation</name>
        <dbReference type="ChEBI" id="CHEBI:23378"/>
        <label>3</label>
    </ligand>
</feature>
<feature type="binding site" evidence="16">
    <location>
        <position position="498"/>
    </location>
    <ligand>
        <name>Cu cation</name>
        <dbReference type="ChEBI" id="CHEBI:23378"/>
        <label>3</label>
    </ligand>
</feature>
<feature type="binding site" evidence="16">
    <location>
        <position position="507"/>
    </location>
    <ligand>
        <name>Cu cation</name>
        <dbReference type="ChEBI" id="CHEBI:23378"/>
        <label>3</label>
    </ligand>
</feature>
<feature type="binding site" evidence="16">
    <location>
        <position position="618"/>
    </location>
    <ligand>
        <name>Cu cation</name>
        <dbReference type="ChEBI" id="CHEBI:23378"/>
        <label>4</label>
    </ligand>
</feature>
<feature type="binding site" evidence="16">
    <location>
        <position position="622"/>
    </location>
    <ligand>
        <name>Cu cation</name>
        <dbReference type="ChEBI" id="CHEBI:23378"/>
        <label>4</label>
    </ligand>
</feature>
<feature type="binding site" evidence="16">
    <location>
        <position position="649"/>
    </location>
    <ligand>
        <name>Cu cation</name>
        <dbReference type="ChEBI" id="CHEBI:23378"/>
        <label>4</label>
    </ligand>
</feature>
<feature type="binding site" evidence="10">
    <location>
        <position position="737"/>
    </location>
    <ligand>
        <name>a divalent metal cation</name>
        <dbReference type="ChEBI" id="CHEBI:60240"/>
        <note>structural</note>
    </ligand>
</feature>
<feature type="binding site" evidence="16">
    <location>
        <position position="892"/>
    </location>
    <ligand>
        <name>Cu cation</name>
        <dbReference type="ChEBI" id="CHEBI:23378"/>
        <label>5</label>
    </ligand>
</feature>
<feature type="binding site" evidence="16">
    <location>
        <position position="912"/>
    </location>
    <ligand>
        <name>Cu cation</name>
        <dbReference type="ChEBI" id="CHEBI:23378"/>
        <label>5</label>
    </ligand>
</feature>
<feature type="binding site" evidence="16">
    <location>
        <position position="921"/>
    </location>
    <ligand>
        <name>Cu cation</name>
        <dbReference type="ChEBI" id="CHEBI:23378"/>
        <label>5</label>
    </ligand>
</feature>
<feature type="binding site" evidence="16">
    <location>
        <position position="1031"/>
    </location>
    <ligand>
        <name>Cu cation</name>
        <dbReference type="ChEBI" id="CHEBI:23378"/>
        <label>6</label>
    </ligand>
</feature>
<feature type="binding site" evidence="16">
    <location>
        <position position="1035"/>
    </location>
    <ligand>
        <name>Cu cation</name>
        <dbReference type="ChEBI" id="CHEBI:23378"/>
        <label>6</label>
    </ligand>
</feature>
<feature type="binding site" evidence="16">
    <location>
        <position position="1062"/>
    </location>
    <ligand>
        <name>Cu cation</name>
        <dbReference type="ChEBI" id="CHEBI:23378"/>
        <label>6</label>
    </ligand>
</feature>
<feature type="binding site" evidence="16">
    <location>
        <position position="1309"/>
    </location>
    <ligand>
        <name>Cu cation</name>
        <dbReference type="ChEBI" id="CHEBI:23378"/>
        <label>7</label>
    </ligand>
</feature>
<feature type="binding site" evidence="16">
    <location>
        <position position="1327"/>
    </location>
    <ligand>
        <name>Cu cation</name>
        <dbReference type="ChEBI" id="CHEBI:23378"/>
        <label>7</label>
    </ligand>
</feature>
<feature type="binding site" evidence="16">
    <location>
        <position position="1336"/>
    </location>
    <ligand>
        <name>Cu cation</name>
        <dbReference type="ChEBI" id="CHEBI:23378"/>
        <label>7</label>
    </ligand>
</feature>
<feature type="binding site" evidence="16">
    <location>
        <position position="1440"/>
    </location>
    <ligand>
        <name>Cu cation</name>
        <dbReference type="ChEBI" id="CHEBI:23378"/>
        <label>8</label>
    </ligand>
</feature>
<feature type="binding site" evidence="16">
    <location>
        <position position="1444"/>
    </location>
    <ligand>
        <name>Cu cation</name>
        <dbReference type="ChEBI" id="CHEBI:23378"/>
        <label>8</label>
    </ligand>
</feature>
<feature type="binding site" evidence="16">
    <location>
        <position position="1471"/>
    </location>
    <ligand>
        <name>Cu cation</name>
        <dbReference type="ChEBI" id="CHEBI:23378"/>
        <label>8</label>
    </ligand>
</feature>
<feature type="binding site" evidence="16">
    <location>
        <position position="1721"/>
    </location>
    <ligand>
        <name>Cu cation</name>
        <dbReference type="ChEBI" id="CHEBI:23378"/>
        <label>9</label>
    </ligand>
</feature>
<feature type="binding site" evidence="16">
    <location>
        <position position="1741"/>
    </location>
    <ligand>
        <name>Cu cation</name>
        <dbReference type="ChEBI" id="CHEBI:23378"/>
        <label>9</label>
    </ligand>
</feature>
<feature type="binding site" evidence="16">
    <location>
        <position position="1750"/>
    </location>
    <ligand>
        <name>Cu cation</name>
        <dbReference type="ChEBI" id="CHEBI:23378"/>
        <label>9</label>
    </ligand>
</feature>
<feature type="binding site" evidence="16">
    <location>
        <position position="1863"/>
    </location>
    <ligand>
        <name>Cu cation</name>
        <dbReference type="ChEBI" id="CHEBI:23378"/>
        <label>10</label>
    </ligand>
</feature>
<feature type="binding site" evidence="16">
    <location>
        <position position="1867"/>
    </location>
    <ligand>
        <name>Cu cation</name>
        <dbReference type="ChEBI" id="CHEBI:23378"/>
        <label>10</label>
    </ligand>
</feature>
<feature type="binding site" evidence="16">
    <location>
        <position position="1894"/>
    </location>
    <ligand>
        <name>Cu cation</name>
        <dbReference type="ChEBI" id="CHEBI:23378"/>
        <label>10</label>
    </ligand>
</feature>
<feature type="binding site" evidence="16">
    <location>
        <position position="2138"/>
    </location>
    <ligand>
        <name>Cu cation</name>
        <dbReference type="ChEBI" id="CHEBI:23378"/>
        <label>11</label>
    </ligand>
</feature>
<feature type="binding site" evidence="16">
    <location>
        <position position="2157"/>
    </location>
    <ligand>
        <name>Cu cation</name>
        <dbReference type="ChEBI" id="CHEBI:23378"/>
        <label>11</label>
    </ligand>
</feature>
<feature type="binding site" evidence="16">
    <location>
        <position position="2166"/>
    </location>
    <ligand>
        <name>Cu cation</name>
        <dbReference type="ChEBI" id="CHEBI:23378"/>
        <label>11</label>
    </ligand>
</feature>
<feature type="binding site" evidence="16">
    <location>
        <position position="2276"/>
    </location>
    <ligand>
        <name>Cu cation</name>
        <dbReference type="ChEBI" id="CHEBI:23378"/>
        <label>12</label>
    </ligand>
</feature>
<feature type="binding site" evidence="16">
    <location>
        <position position="2280"/>
    </location>
    <ligand>
        <name>Cu cation</name>
        <dbReference type="ChEBI" id="CHEBI:23378"/>
        <label>12</label>
    </ligand>
</feature>
<feature type="binding site" evidence="16">
    <location>
        <position position="2307"/>
    </location>
    <ligand>
        <name>Cu cation</name>
        <dbReference type="ChEBI" id="CHEBI:23378"/>
        <label>12</label>
    </ligand>
</feature>
<feature type="binding site" evidence="10">
    <location>
        <position position="2424"/>
    </location>
    <ligand>
        <name>a divalent metal cation</name>
        <dbReference type="ChEBI" id="CHEBI:60240"/>
        <note>structural</note>
    </ligand>
</feature>
<feature type="binding site" evidence="16">
    <location>
        <position position="2558"/>
    </location>
    <ligand>
        <name>Cu cation</name>
        <dbReference type="ChEBI" id="CHEBI:23378"/>
        <label>13</label>
    </ligand>
</feature>
<feature type="binding site" evidence="16">
    <location>
        <position position="2577"/>
    </location>
    <ligand>
        <name>Cu cation</name>
        <dbReference type="ChEBI" id="CHEBI:23378"/>
        <label>13</label>
    </ligand>
</feature>
<feature type="binding site" evidence="16">
    <location>
        <position position="2586"/>
    </location>
    <ligand>
        <name>Cu cation</name>
        <dbReference type="ChEBI" id="CHEBI:23378"/>
        <label>13</label>
    </ligand>
</feature>
<feature type="binding site" evidence="16">
    <location>
        <position position="2686"/>
    </location>
    <ligand>
        <name>Cu cation</name>
        <dbReference type="ChEBI" id="CHEBI:23378"/>
        <label>14</label>
    </ligand>
</feature>
<feature type="binding site" evidence="16">
    <location>
        <position position="2690"/>
    </location>
    <ligand>
        <name>Cu cation</name>
        <dbReference type="ChEBI" id="CHEBI:23378"/>
        <label>14</label>
    </ligand>
</feature>
<feature type="binding site" evidence="16">
    <location>
        <position position="2717"/>
    </location>
    <ligand>
        <name>Cu cation</name>
        <dbReference type="ChEBI" id="CHEBI:23378"/>
        <label>14</label>
    </ligand>
</feature>
<feature type="binding site" evidence="15 16">
    <location>
        <position position="2962"/>
    </location>
    <ligand>
        <name>Cu cation</name>
        <dbReference type="ChEBI" id="CHEBI:23378"/>
        <label>15</label>
    </ligand>
</feature>
<feature type="binding site" evidence="15 16">
    <location>
        <position position="2981"/>
    </location>
    <ligand>
        <name>Cu cation</name>
        <dbReference type="ChEBI" id="CHEBI:23378"/>
        <label>15</label>
    </ligand>
</feature>
<feature type="binding site" evidence="15 16">
    <location>
        <position position="2990"/>
    </location>
    <ligand>
        <name>Cu cation</name>
        <dbReference type="ChEBI" id="CHEBI:23378"/>
        <label>15</label>
    </ligand>
</feature>
<feature type="binding site" evidence="16">
    <location>
        <position position="3091"/>
    </location>
    <ligand>
        <name>Cu cation</name>
        <dbReference type="ChEBI" id="CHEBI:23378"/>
        <label>16</label>
    </ligand>
</feature>
<feature type="binding site" evidence="16">
    <location>
        <position position="3095"/>
    </location>
    <ligand>
        <name>Cu cation</name>
        <dbReference type="ChEBI" id="CHEBI:23378"/>
        <label>16</label>
    </ligand>
</feature>
<feature type="binding site" evidence="16">
    <location>
        <position position="3122"/>
    </location>
    <ligand>
        <name>Cu cation</name>
        <dbReference type="ChEBI" id="CHEBI:23378"/>
        <label>16</label>
    </ligand>
</feature>
<feature type="glycosylation site" description="N-linked (GlcNAc...) asparagine" evidence="3">
    <location>
        <position position="403"/>
    </location>
</feature>
<feature type="glycosylation site" description="N-linked (GlcNAc...) asparagine" evidence="3">
    <location>
        <position position="545"/>
    </location>
</feature>
<feature type="glycosylation site" description="N-linked (GlcNAc...) asparagine" evidence="3">
    <location>
        <position position="1648"/>
    </location>
</feature>
<feature type="glycosylation site" description="N-linked (GlcNAc...) asparagine" evidence="3">
    <location>
        <position position="2145"/>
    </location>
</feature>
<feature type="glycosylation site" description="N-linked (GlcNAc...) asparagine" evidence="3">
    <location>
        <position position="2571"/>
    </location>
</feature>
<feature type="glycosylation site" description="N-linked (GlcNAc...) asparagine" evidence="3">
    <location>
        <position position="3278"/>
    </location>
</feature>
<feature type="disulfide bond" evidence="16">
    <location>
        <begin position="64"/>
        <end position="73"/>
    </location>
</feature>
<feature type="disulfide bond" evidence="16">
    <location>
        <begin position="185"/>
        <end position="252"/>
    </location>
</feature>
<feature type="disulfide bond" evidence="16">
    <location>
        <begin position="339"/>
        <end position="351"/>
    </location>
</feature>
<feature type="disulfide bond" evidence="16">
    <location>
        <begin position="484"/>
        <end position="495"/>
    </location>
</feature>
<feature type="disulfide bond" evidence="16">
    <location>
        <begin position="608"/>
        <end position="674"/>
    </location>
</feature>
<feature type="disulfide bond" evidence="16">
    <location>
        <begin position="898"/>
        <end position="909"/>
    </location>
</feature>
<feature type="disulfide bond" evidence="16">
    <location>
        <begin position="1021"/>
        <end position="1088"/>
    </location>
</feature>
<feature type="disulfide bond" evidence="16">
    <location>
        <begin position="1178"/>
        <end position="1184"/>
    </location>
</feature>
<feature type="disulfide bond" evidence="16">
    <location>
        <begin position="1315"/>
        <end position="1324"/>
    </location>
</feature>
<feature type="disulfide bond" evidence="16">
    <location>
        <begin position="1430"/>
        <end position="1497"/>
    </location>
</feature>
<feature type="disulfide bond" evidence="16">
    <location>
        <begin position="1585"/>
        <end position="1595"/>
    </location>
</feature>
<feature type="disulfide bond" evidence="16">
    <location>
        <begin position="1727"/>
        <end position="1738"/>
    </location>
</feature>
<feature type="disulfide bond" evidence="16">
    <location>
        <begin position="1853"/>
        <end position="1920"/>
    </location>
</feature>
<feature type="disulfide bond" evidence="16">
    <location>
        <begin position="2009"/>
        <end position="2015"/>
    </location>
</feature>
<feature type="disulfide bond" evidence="16">
    <location>
        <begin position="2144"/>
        <end position="2154"/>
    </location>
</feature>
<feature type="disulfide bond" evidence="16">
    <location>
        <begin position="2266"/>
        <end position="2333"/>
    </location>
</feature>
<feature type="disulfide bond" evidence="16">
    <location>
        <begin position="2420"/>
        <end position="2426"/>
    </location>
</feature>
<feature type="disulfide bond" evidence="16">
    <location>
        <begin position="2564"/>
        <end position="2574"/>
    </location>
</feature>
<feature type="disulfide bond" evidence="16">
    <location>
        <begin position="2676"/>
        <end position="2743"/>
    </location>
</feature>
<feature type="disulfide bond" evidence="16">
    <location>
        <begin position="2830"/>
        <end position="2836"/>
    </location>
</feature>
<feature type="disulfide bond" evidence="15 16">
    <location>
        <begin position="2968"/>
        <end position="2978"/>
    </location>
</feature>
<feature type="disulfide bond" evidence="15 16">
    <location>
        <begin position="3081"/>
        <end position="3148"/>
    </location>
</feature>
<feature type="disulfide bond" evidence="15 16">
    <location>
        <begin position="3367"/>
        <end position="3400"/>
    </location>
</feature>
<feature type="cross-link" description="2'-(S-cysteinyl)-histidine (Cys-His)" evidence="1 10">
    <location>
        <begin position="74"/>
        <end position="76"/>
    </location>
</feature>
<feature type="cross-link" description="2'-(S-cysteinyl)-histidine (Cys-His)" evidence="10">
    <location>
        <begin position="287"/>
        <end position="290"/>
    </location>
</feature>
<feature type="cross-link" description="2'-(S-cysteinyl)-histidine (Cys-His)" evidence="1 10">
    <location>
        <begin position="496"/>
        <end position="498"/>
    </location>
</feature>
<feature type="cross-link" description="2'-(S-cysteinyl)-histidine (Cys-His)" evidence="1 10">
    <location>
        <begin position="910"/>
        <end position="912"/>
    </location>
</feature>
<feature type="cross-link" description="2'-(S-cysteinyl)-histidine (Cys-His)" evidence="1 10">
    <location>
        <begin position="1325"/>
        <end position="1327"/>
    </location>
</feature>
<feature type="cross-link" description="2'-(S-cysteinyl)-histidine (Cys-His)" evidence="1 10">
    <location>
        <begin position="1739"/>
        <end position="1741"/>
    </location>
</feature>
<feature type="cross-link" description="2'-(S-cysteinyl)-histidine (Cys-His)" evidence="1 10">
    <location>
        <begin position="2155"/>
        <end position="2157"/>
    </location>
</feature>
<feature type="cross-link" description="2'-(S-cysteinyl)-histidine (Cys-His)" evidence="1 10">
    <location>
        <begin position="2575"/>
        <end position="2577"/>
    </location>
</feature>
<feature type="cross-link" description="2'-(S-cysteinyl)-histidine (Cys-His)" evidence="1 10">
    <location>
        <begin position="2979"/>
        <end position="2981"/>
    </location>
</feature>
<feature type="sequence conflict" description="In Ref. 3; AA sequence." evidence="8" ref="3">
    <original>E</original>
    <variation>G</variation>
    <location>
        <position position="17"/>
    </location>
</feature>
<accession>Q10583</accession>
<accession>Q53IP9</accession>
<accession>Q6KC56</accession>
<keyword id="KW-0002">3D-structure</keyword>
<keyword id="KW-0186">Copper</keyword>
<keyword id="KW-0903">Direct protein sequencing</keyword>
<keyword id="KW-1015">Disulfide bond</keyword>
<keyword id="KW-0325">Glycoprotein</keyword>
<keyword id="KW-0479">Metal-binding</keyword>
<keyword id="KW-0561">Oxygen transport</keyword>
<keyword id="KW-0677">Repeat</keyword>
<keyword id="KW-0964">Secreted</keyword>
<keyword id="KW-0732">Signal</keyword>
<keyword id="KW-0883">Thioether bond</keyword>
<keyword id="KW-0813">Transport</keyword>
<keyword id="KW-0853">WD repeat</keyword>
<comment type="function">
    <text evidence="11">Hemocyanins are copper-containing oxygen carriers occurring freely dissolved in the hemolymph of many mollusks and arthropods.</text>
</comment>
<comment type="subunit">
    <text evidence="4">Homo-didecamer, with two decamers assembled face-to-face at their open ends. This didecamer form a stable 25 nM cylinder wall.</text>
</comment>
<comment type="subcellular location">
    <subcellularLocation>
        <location>Secreted</location>
        <location>Extracellular space</location>
    </subcellularLocation>
</comment>
<comment type="tissue specificity">
    <text evidence="5">Hemolymph.</text>
</comment>
<comment type="domain">
    <text evidence="10">The protein is composed of 8 globular functional units (a-&gt;h), forming a 'pearl chain'. Each unit is separated from the next by a linker. Since the lengths but not the exact positions are known, lengths are indicated here in free text. Linker lengths in amino acids are: 20 (a-&gt;b), 13 (b-&gt;c), 19 (c-&gt;d), 16 (d-&gt;e), 14 (e-&gt;f), 17 (f-&gt;g), and 17 (g-&gt;h).</text>
</comment>
<comment type="PTM">
    <text evidence="10">Probably N-glycosylated (Probable). Asn-1280 and Asn-2484 are buried deeply in the protein which make them inaccessible for sugar attachment (Probable). Asn-3278 N-glycan is likely to represent a diantennate carbohydrate tree (Probable). The didecamer is almost evenly tagged by a total of 120 sugar trees (Probable).</text>
</comment>
<comment type="biotechnology">
    <text evidence="9">Potent immunogen used classically as a carrier protein for haptens and more recently in human vaccines and for immunotherapy of bladder cancer.</text>
</comment>
<comment type="similarity">
    <text evidence="8">Belongs to the tyrosinase family. Hemocyanin subfamily.</text>
</comment>
<comment type="sequence caution" evidence="8">
    <conflict type="erroneous gene model prediction">
        <sequence resource="EMBL-CDS" id="CAG28307"/>
    </conflict>
</comment>
<comment type="sequence caution" evidence="8">
    <conflict type="erroneous gene model prediction">
        <sequence resource="EMBL-CDS" id="CAG28309"/>
    </conflict>
</comment>
<proteinExistence type="evidence at protein level"/>
<gene>
    <name evidence="6" type="primary">KLH1</name>
</gene>